<evidence type="ECO:0000255" key="1">
    <source>
        <dbReference type="HAMAP-Rule" id="MF_02202"/>
    </source>
</evidence>
<evidence type="ECO:0000305" key="2"/>
<proteinExistence type="inferred from homology"/>
<feature type="chain" id="PRO_0000145826" description="Tol-Pal system protein TolQ">
    <location>
        <begin position="1"/>
        <end position="230"/>
    </location>
</feature>
<feature type="transmembrane region" description="Helical" evidence="1">
    <location>
        <begin position="16"/>
        <end position="36"/>
    </location>
</feature>
<feature type="transmembrane region" description="Helical" evidence="1">
    <location>
        <begin position="139"/>
        <end position="159"/>
    </location>
</feature>
<feature type="transmembrane region" description="Helical" evidence="1">
    <location>
        <begin position="171"/>
        <end position="191"/>
    </location>
</feature>
<reference key="1">
    <citation type="journal article" date="2002" name="Nucleic Acids Res.">
        <title>Genome sequence of Shigella flexneri 2a: insights into pathogenicity through comparison with genomes of Escherichia coli K12 and O157.</title>
        <authorList>
            <person name="Jin Q."/>
            <person name="Yuan Z."/>
            <person name="Xu J."/>
            <person name="Wang Y."/>
            <person name="Shen Y."/>
            <person name="Lu W."/>
            <person name="Wang J."/>
            <person name="Liu H."/>
            <person name="Yang J."/>
            <person name="Yang F."/>
            <person name="Zhang X."/>
            <person name="Zhang J."/>
            <person name="Yang G."/>
            <person name="Wu H."/>
            <person name="Qu D."/>
            <person name="Dong J."/>
            <person name="Sun L."/>
            <person name="Xue Y."/>
            <person name="Zhao A."/>
            <person name="Gao Y."/>
            <person name="Zhu J."/>
            <person name="Kan B."/>
            <person name="Ding K."/>
            <person name="Chen S."/>
            <person name="Cheng H."/>
            <person name="Yao Z."/>
            <person name="He B."/>
            <person name="Chen R."/>
            <person name="Ma D."/>
            <person name="Qiang B."/>
            <person name="Wen Y."/>
            <person name="Hou Y."/>
            <person name="Yu J."/>
        </authorList>
    </citation>
    <scope>NUCLEOTIDE SEQUENCE [LARGE SCALE GENOMIC DNA]</scope>
    <source>
        <strain>301 / Serotype 2a</strain>
    </source>
</reference>
<reference key="2">
    <citation type="journal article" date="2003" name="Infect. Immun.">
        <title>Complete genome sequence and comparative genomics of Shigella flexneri serotype 2a strain 2457T.</title>
        <authorList>
            <person name="Wei J."/>
            <person name="Goldberg M.B."/>
            <person name="Burland V."/>
            <person name="Venkatesan M.M."/>
            <person name="Deng W."/>
            <person name="Fournier G."/>
            <person name="Mayhew G.F."/>
            <person name="Plunkett G. III"/>
            <person name="Rose D.J."/>
            <person name="Darling A."/>
            <person name="Mau B."/>
            <person name="Perna N.T."/>
            <person name="Payne S.M."/>
            <person name="Runyen-Janecky L.J."/>
            <person name="Zhou S."/>
            <person name="Schwartz D.C."/>
            <person name="Blattner F.R."/>
        </authorList>
    </citation>
    <scope>NUCLEOTIDE SEQUENCE [LARGE SCALE GENOMIC DNA]</scope>
    <source>
        <strain>ATCC 700930 / 2457T / Serotype 2a</strain>
    </source>
</reference>
<comment type="function">
    <text evidence="1">Part of the Tol-Pal system, which plays a role in outer membrane invagination during cell division and is important for maintaining outer membrane integrity. Required, with TolR, for the proton motive force-dependent activation of TolA and for TolA-Pal interaction.</text>
</comment>
<comment type="subunit">
    <text evidence="1">The Tol-Pal system is composed of five core proteins: the inner membrane proteins TolA, TolQ and TolR, the periplasmic protein TolB and the outer membrane protein Pal. They form a network linking the inner and outer membranes and the peptidoglycan layer.</text>
</comment>
<comment type="subcellular location">
    <subcellularLocation>
        <location evidence="1">Cell inner membrane</location>
        <topology evidence="1">Multi-pass membrane protein</topology>
    </subcellularLocation>
</comment>
<comment type="similarity">
    <text evidence="1 2">Belongs to the ExbB/TolQ family.</text>
</comment>
<accession>P0ABV1</accession>
<accession>P05828</accession>
<gene>
    <name evidence="1" type="primary">tolQ</name>
    <name type="ordered locus">SF0560</name>
    <name type="ordered locus">S0573</name>
</gene>
<sequence length="230" mass="25598">MTDMNILDLFLKASLLVKLIMLILIGFSIASWAIIIQRTRILNAAAREAEAFEDKFWSGIELSRLYQESQGKRDNLTGSEQIFYSGFKEFVRLHRANSHAPEAVVEGASRAMRISMNRELENLETHIPFLGTVGSISPYIGLFGTVWGIMHAFIALGAVKQATLQMVAPGIAEALIATAIGLFAAIPAVMAYNRLNQRVNKLELNYDNFMEEFTAILHRQAFTVSESNKG</sequence>
<dbReference type="EMBL" id="AE005674">
    <property type="protein sequence ID" value="AAN42204.1"/>
    <property type="molecule type" value="Genomic_DNA"/>
</dbReference>
<dbReference type="EMBL" id="AE014073">
    <property type="protein sequence ID" value="AAP16077.1"/>
    <property type="molecule type" value="Genomic_DNA"/>
</dbReference>
<dbReference type="RefSeq" id="NP_706497.1">
    <property type="nucleotide sequence ID" value="NC_004337.2"/>
</dbReference>
<dbReference type="RefSeq" id="WP_000131314.1">
    <property type="nucleotide sequence ID" value="NZ_WPGW01000046.1"/>
</dbReference>
<dbReference type="SMR" id="P0ABV1"/>
<dbReference type="STRING" id="198214.SF0560"/>
<dbReference type="PaxDb" id="198214-SF0560"/>
<dbReference type="GeneID" id="1023502"/>
<dbReference type="GeneID" id="93776747"/>
<dbReference type="KEGG" id="sfl:SF0560"/>
<dbReference type="KEGG" id="sfx:S0573"/>
<dbReference type="PATRIC" id="fig|198214.7.peg.649"/>
<dbReference type="HOGENOM" id="CLU_053325_2_2_6"/>
<dbReference type="Proteomes" id="UP000001006">
    <property type="component" value="Chromosome"/>
</dbReference>
<dbReference type="Proteomes" id="UP000002673">
    <property type="component" value="Chromosome"/>
</dbReference>
<dbReference type="GO" id="GO:0005886">
    <property type="term" value="C:plasma membrane"/>
    <property type="evidence" value="ECO:0007669"/>
    <property type="project" value="UniProtKB-SubCell"/>
</dbReference>
<dbReference type="GO" id="GO:0043213">
    <property type="term" value="P:bacteriocin transport"/>
    <property type="evidence" value="ECO:0007669"/>
    <property type="project" value="InterPro"/>
</dbReference>
<dbReference type="GO" id="GO:0051301">
    <property type="term" value="P:cell division"/>
    <property type="evidence" value="ECO:0007669"/>
    <property type="project" value="UniProtKB-UniRule"/>
</dbReference>
<dbReference type="GO" id="GO:0017038">
    <property type="term" value="P:protein import"/>
    <property type="evidence" value="ECO:0007669"/>
    <property type="project" value="TreeGrafter"/>
</dbReference>
<dbReference type="HAMAP" id="MF_02202">
    <property type="entry name" value="TolQ"/>
    <property type="match status" value="1"/>
</dbReference>
<dbReference type="InterPro" id="IPR050790">
    <property type="entry name" value="ExbB/TolQ_transport"/>
</dbReference>
<dbReference type="InterPro" id="IPR002898">
    <property type="entry name" value="MotA_ExbB_proton_chnl"/>
</dbReference>
<dbReference type="InterPro" id="IPR014163">
    <property type="entry name" value="Tol-Pal_TolQ"/>
</dbReference>
<dbReference type="NCBIfam" id="NF008066">
    <property type="entry name" value="PRK10801.1"/>
    <property type="match status" value="1"/>
</dbReference>
<dbReference type="NCBIfam" id="TIGR02796">
    <property type="entry name" value="tolQ"/>
    <property type="match status" value="1"/>
</dbReference>
<dbReference type="PANTHER" id="PTHR30625">
    <property type="entry name" value="PROTEIN TOLQ"/>
    <property type="match status" value="1"/>
</dbReference>
<dbReference type="PANTHER" id="PTHR30625:SF3">
    <property type="entry name" value="TOL-PAL SYSTEM PROTEIN TOLQ"/>
    <property type="match status" value="1"/>
</dbReference>
<dbReference type="Pfam" id="PF01618">
    <property type="entry name" value="MotA_ExbB"/>
    <property type="match status" value="1"/>
</dbReference>
<protein>
    <recommendedName>
        <fullName evidence="1">Tol-Pal system protein TolQ</fullName>
    </recommendedName>
</protein>
<keyword id="KW-0131">Cell cycle</keyword>
<keyword id="KW-0132">Cell division</keyword>
<keyword id="KW-0997">Cell inner membrane</keyword>
<keyword id="KW-1003">Cell membrane</keyword>
<keyword id="KW-0472">Membrane</keyword>
<keyword id="KW-1185">Reference proteome</keyword>
<keyword id="KW-0812">Transmembrane</keyword>
<keyword id="KW-1133">Transmembrane helix</keyword>
<organism>
    <name type="scientific">Shigella flexneri</name>
    <dbReference type="NCBI Taxonomy" id="623"/>
    <lineage>
        <taxon>Bacteria</taxon>
        <taxon>Pseudomonadati</taxon>
        <taxon>Pseudomonadota</taxon>
        <taxon>Gammaproteobacteria</taxon>
        <taxon>Enterobacterales</taxon>
        <taxon>Enterobacteriaceae</taxon>
        <taxon>Shigella</taxon>
    </lineage>
</organism>
<name>TOLQ_SHIFL</name>